<keyword id="KW-0150">Chloroplast</keyword>
<keyword id="KW-0240">DNA-directed RNA polymerase</keyword>
<keyword id="KW-0460">Magnesium</keyword>
<keyword id="KW-0479">Metal-binding</keyword>
<keyword id="KW-0548">Nucleotidyltransferase</keyword>
<keyword id="KW-0934">Plastid</keyword>
<keyword id="KW-1185">Reference proteome</keyword>
<keyword id="KW-0804">Transcription</keyword>
<keyword id="KW-0808">Transferase</keyword>
<keyword id="KW-0862">Zinc</keyword>
<proteinExistence type="inferred from homology"/>
<comment type="function">
    <text evidence="1">DNA-dependent RNA polymerase catalyzes the transcription of DNA into RNA using the four ribonucleoside triphosphates as substrates.</text>
</comment>
<comment type="catalytic activity">
    <reaction evidence="1">
        <text>RNA(n) + a ribonucleoside 5'-triphosphate = RNA(n+1) + diphosphate</text>
        <dbReference type="Rhea" id="RHEA:21248"/>
        <dbReference type="Rhea" id="RHEA-COMP:14527"/>
        <dbReference type="Rhea" id="RHEA-COMP:17342"/>
        <dbReference type="ChEBI" id="CHEBI:33019"/>
        <dbReference type="ChEBI" id="CHEBI:61557"/>
        <dbReference type="ChEBI" id="CHEBI:140395"/>
        <dbReference type="EC" id="2.7.7.6"/>
    </reaction>
</comment>
<comment type="cofactor">
    <cofactor evidence="1">
        <name>Mg(2+)</name>
        <dbReference type="ChEBI" id="CHEBI:18420"/>
    </cofactor>
    <text evidence="1">Binds 1 Mg(2+) ion per subunit.</text>
</comment>
<comment type="cofactor">
    <cofactor evidence="1">
        <name>Zn(2+)</name>
        <dbReference type="ChEBI" id="CHEBI:29105"/>
    </cofactor>
    <text evidence="1">Binds 1 Zn(2+) ion per subunit.</text>
</comment>
<comment type="subunit">
    <text evidence="1">In plastids the minimal PEP RNA polymerase catalytic core is composed of four subunits: alpha, beta, beta', and beta''. When a (nuclear-encoded) sigma factor is associated with the core the holoenzyme is formed, which can initiate transcription.</text>
</comment>
<comment type="subcellular location">
    <subcellularLocation>
        <location evidence="1">Plastid</location>
        <location evidence="1">Chloroplast</location>
    </subcellularLocation>
</comment>
<comment type="similarity">
    <text evidence="1">Belongs to the RNA polymerase beta' chain family. RpoC1 subfamily.</text>
</comment>
<comment type="sequence caution" evidence="2">
    <conflict type="erroneous initiation">
        <sequence resource="EMBL-CDS" id="BAE46638"/>
    </conflict>
    <text>Extended N-terminus.</text>
</comment>
<geneLocation type="chloroplast"/>
<feature type="chain" id="PRO_0000225322" description="DNA-directed RNA polymerase subunit beta'">
    <location>
        <begin position="1"/>
        <end position="681"/>
    </location>
</feature>
<feature type="binding site" evidence="1">
    <location>
        <position position="69"/>
    </location>
    <ligand>
        <name>Zn(2+)</name>
        <dbReference type="ChEBI" id="CHEBI:29105"/>
    </ligand>
</feature>
<feature type="binding site" evidence="1">
    <location>
        <position position="71"/>
    </location>
    <ligand>
        <name>Zn(2+)</name>
        <dbReference type="ChEBI" id="CHEBI:29105"/>
    </ligand>
</feature>
<feature type="binding site" evidence="1">
    <location>
        <position position="87"/>
    </location>
    <ligand>
        <name>Zn(2+)</name>
        <dbReference type="ChEBI" id="CHEBI:29105"/>
    </ligand>
</feature>
<feature type="binding site" evidence="1">
    <location>
        <position position="90"/>
    </location>
    <ligand>
        <name>Zn(2+)</name>
        <dbReference type="ChEBI" id="CHEBI:29105"/>
    </ligand>
</feature>
<feature type="binding site" evidence="1">
    <location>
        <position position="489"/>
    </location>
    <ligand>
        <name>Mg(2+)</name>
        <dbReference type="ChEBI" id="CHEBI:18420"/>
    </ligand>
</feature>
<feature type="binding site" evidence="1">
    <location>
        <position position="491"/>
    </location>
    <ligand>
        <name>Mg(2+)</name>
        <dbReference type="ChEBI" id="CHEBI:18420"/>
    </ligand>
</feature>
<feature type="binding site" evidence="1">
    <location>
        <position position="493"/>
    </location>
    <ligand>
        <name>Mg(2+)</name>
        <dbReference type="ChEBI" id="CHEBI:18420"/>
    </ligand>
</feature>
<name>RPOC1_NICSY</name>
<reference key="1">
    <citation type="journal article" date="2006" name="Mol. Genet. Genomics">
        <title>The chloroplast genome of Nicotiana sylvestris and Nicotiana tomentosiformis: complete sequencing confirms that the Nicotiana sylvestris progenitor is the maternal genome donor of Nicotiana tabacum.</title>
        <authorList>
            <person name="Yukawa M."/>
            <person name="Tsudzuki T."/>
            <person name="Sugiura M."/>
        </authorList>
    </citation>
    <scope>NUCLEOTIDE SEQUENCE [LARGE SCALE GENOMIC DNA]</scope>
</reference>
<evidence type="ECO:0000255" key="1">
    <source>
        <dbReference type="HAMAP-Rule" id="MF_01323"/>
    </source>
</evidence>
<evidence type="ECO:0000305" key="2"/>
<accession>Q3C1G8</accession>
<organism>
    <name type="scientific">Nicotiana sylvestris</name>
    <name type="common">Wood tobacco</name>
    <name type="synonym">South American tobacco</name>
    <dbReference type="NCBI Taxonomy" id="4096"/>
    <lineage>
        <taxon>Eukaryota</taxon>
        <taxon>Viridiplantae</taxon>
        <taxon>Streptophyta</taxon>
        <taxon>Embryophyta</taxon>
        <taxon>Tracheophyta</taxon>
        <taxon>Spermatophyta</taxon>
        <taxon>Magnoliopsida</taxon>
        <taxon>eudicotyledons</taxon>
        <taxon>Gunneridae</taxon>
        <taxon>Pentapetalae</taxon>
        <taxon>asterids</taxon>
        <taxon>lamiids</taxon>
        <taxon>Solanales</taxon>
        <taxon>Solanaceae</taxon>
        <taxon>Nicotianoideae</taxon>
        <taxon>Nicotianeae</taxon>
        <taxon>Nicotiana</taxon>
    </lineage>
</organism>
<sequence>MIDRYKHQQLRIGSVSPQQISAWATKILPNGEIVGEVTKPYTFHYKTNKPEKDGLFCERIFGPIKSGICACGNYRVIGDEKEDPKFCEQCGVEFVDSRIRRYQMGYIKLACPVTHVWYLKRLPSYIANLLDKPLKELEGLVYCDFSFARPITKKPTFLRLRGLFEYEIQSWKYSIPLFFTTQGFDTFRNREISTGAGAIREQLADLDLRIIIENSLVEWEELGEEGHTGNEWEDRKVGRRKDFLVRRVELAKHFIRTNIEPEWMVLCLLPVLPPELRPIIQIDGGKLMSSDINELYRRVIYRNNTLTDLLTTSRSTPGELVMCQEKLVQEAVDTLLDNGIRGQPMRDGHNKVYKSFSDVIEGKEGRFRETLLGKRVDYSGRSVIVVGPSLSLHRCGLPREIAIELFQTFVIRGLIRQHLASNIGVAKSKIREKEPIVWEILQEVMQGHPVLLNRAPTLHRLGIQAFQPVLVEGRAICLHPLVCKGFNADFDGDQMAVHVPLSLEAQVEARLLMFSHMNLLSPAIGDPISVPTQDMLIGLYVLTSGNHRGICVNRYNPCNRRNYQNQKRSDNSHYKYTKEPFFSNSYDAIGAYRQKRINLDSPLWLRWRLDQRVIASRETPIEVHYESLGTFYEIYGHYLIVRSLKKQILFIYIRTTVGHIALYREIEEAIQGFSRAYSSGT</sequence>
<gene>
    <name evidence="1" type="primary">rpoC1</name>
</gene>
<dbReference type="EC" id="2.7.7.6" evidence="1"/>
<dbReference type="EMBL" id="AB237912">
    <property type="protein sequence ID" value="BAE46638.1"/>
    <property type="status" value="ALT_INIT"/>
    <property type="molecule type" value="Genomic_DNA"/>
</dbReference>
<dbReference type="RefSeq" id="YP_358663.1">
    <property type="nucleotide sequence ID" value="NC_007500.1"/>
</dbReference>
<dbReference type="SMR" id="Q3C1G8"/>
<dbReference type="GeneID" id="3735091"/>
<dbReference type="KEGG" id="nsy:3735091"/>
<dbReference type="OrthoDB" id="19435at4085"/>
<dbReference type="Proteomes" id="UP000189701">
    <property type="component" value="Chloroplast Pltd"/>
</dbReference>
<dbReference type="GO" id="GO:0009507">
    <property type="term" value="C:chloroplast"/>
    <property type="evidence" value="ECO:0007669"/>
    <property type="project" value="UniProtKB-SubCell"/>
</dbReference>
<dbReference type="GO" id="GO:0000428">
    <property type="term" value="C:DNA-directed RNA polymerase complex"/>
    <property type="evidence" value="ECO:0007669"/>
    <property type="project" value="UniProtKB-KW"/>
</dbReference>
<dbReference type="GO" id="GO:0005739">
    <property type="term" value="C:mitochondrion"/>
    <property type="evidence" value="ECO:0007669"/>
    <property type="project" value="GOC"/>
</dbReference>
<dbReference type="GO" id="GO:0003677">
    <property type="term" value="F:DNA binding"/>
    <property type="evidence" value="ECO:0007669"/>
    <property type="project" value="UniProtKB-UniRule"/>
</dbReference>
<dbReference type="GO" id="GO:0003899">
    <property type="term" value="F:DNA-directed RNA polymerase activity"/>
    <property type="evidence" value="ECO:0007669"/>
    <property type="project" value="UniProtKB-UniRule"/>
</dbReference>
<dbReference type="GO" id="GO:0000287">
    <property type="term" value="F:magnesium ion binding"/>
    <property type="evidence" value="ECO:0007669"/>
    <property type="project" value="UniProtKB-UniRule"/>
</dbReference>
<dbReference type="GO" id="GO:0008270">
    <property type="term" value="F:zinc ion binding"/>
    <property type="evidence" value="ECO:0007669"/>
    <property type="project" value="UniProtKB-UniRule"/>
</dbReference>
<dbReference type="GO" id="GO:0006351">
    <property type="term" value="P:DNA-templated transcription"/>
    <property type="evidence" value="ECO:0007669"/>
    <property type="project" value="UniProtKB-UniRule"/>
</dbReference>
<dbReference type="FunFam" id="1.10.40.90:FF:000002">
    <property type="entry name" value="DNA-directed RNA polymerase subunit"/>
    <property type="match status" value="1"/>
</dbReference>
<dbReference type="FunFam" id="4.10.860.120:FF:000007">
    <property type="entry name" value="DNA-directed RNA polymerase subunit gamma"/>
    <property type="match status" value="1"/>
</dbReference>
<dbReference type="Gene3D" id="1.10.40.90">
    <property type="match status" value="1"/>
</dbReference>
<dbReference type="Gene3D" id="2.40.40.20">
    <property type="match status" value="1"/>
</dbReference>
<dbReference type="Gene3D" id="4.10.860.120">
    <property type="entry name" value="RNA polymerase II, clamp domain"/>
    <property type="match status" value="1"/>
</dbReference>
<dbReference type="Gene3D" id="1.10.274.100">
    <property type="entry name" value="RNA polymerase Rpb1, domain 3"/>
    <property type="match status" value="1"/>
</dbReference>
<dbReference type="HAMAP" id="MF_01323">
    <property type="entry name" value="RNApol_bact_RpoC1"/>
    <property type="match status" value="1"/>
</dbReference>
<dbReference type="InterPro" id="IPR045867">
    <property type="entry name" value="DNA-dir_RpoC_beta_prime"/>
</dbReference>
<dbReference type="InterPro" id="IPR000722">
    <property type="entry name" value="RNA_pol_asu"/>
</dbReference>
<dbReference type="InterPro" id="IPR006592">
    <property type="entry name" value="RNA_pol_N"/>
</dbReference>
<dbReference type="InterPro" id="IPR007080">
    <property type="entry name" value="RNA_pol_Rpb1_1"/>
</dbReference>
<dbReference type="InterPro" id="IPR042102">
    <property type="entry name" value="RNA_pol_Rpb1_3_sf"/>
</dbReference>
<dbReference type="InterPro" id="IPR044893">
    <property type="entry name" value="RNA_pol_Rpb1_clamp_domain"/>
</dbReference>
<dbReference type="InterPro" id="IPR034678">
    <property type="entry name" value="RNApol_RpoC1"/>
</dbReference>
<dbReference type="PANTHER" id="PTHR19376">
    <property type="entry name" value="DNA-DIRECTED RNA POLYMERASE"/>
    <property type="match status" value="1"/>
</dbReference>
<dbReference type="PANTHER" id="PTHR19376:SF54">
    <property type="entry name" value="DNA-DIRECTED RNA POLYMERASE SUBUNIT BETA"/>
    <property type="match status" value="1"/>
</dbReference>
<dbReference type="Pfam" id="PF04997">
    <property type="entry name" value="RNA_pol_Rpb1_1"/>
    <property type="match status" value="1"/>
</dbReference>
<dbReference type="Pfam" id="PF00623">
    <property type="entry name" value="RNA_pol_Rpb1_2"/>
    <property type="match status" value="2"/>
</dbReference>
<dbReference type="SMART" id="SM00663">
    <property type="entry name" value="RPOLA_N"/>
    <property type="match status" value="1"/>
</dbReference>
<dbReference type="SUPFAM" id="SSF64484">
    <property type="entry name" value="beta and beta-prime subunits of DNA dependent RNA-polymerase"/>
    <property type="match status" value="1"/>
</dbReference>
<protein>
    <recommendedName>
        <fullName evidence="1">DNA-directed RNA polymerase subunit beta'</fullName>
        <ecNumber evidence="1">2.7.7.6</ecNumber>
    </recommendedName>
    <alternativeName>
        <fullName evidence="1">PEP</fullName>
    </alternativeName>
    <alternativeName>
        <fullName evidence="1">Plastid-encoded RNA polymerase subunit beta'</fullName>
        <shortName evidence="1">RNA polymerase subunit beta'</shortName>
    </alternativeName>
</protein>